<reference key="1">
    <citation type="journal article" date="1990" name="Biochem. Int.">
        <title>The primary structure of the precursor to core protein II, a putative member of mitochondrial processing protease family, of rat mitochondrial cytochrome bc1 complex deduced from cDNA sequence analysis.</title>
        <authorList>
            <person name="Hosokawa Y."/>
            <person name="Suzuki H."/>
            <person name="Toda H."/>
            <person name="Nishikimi M."/>
            <person name="Ozawa T."/>
        </authorList>
    </citation>
    <scope>NUCLEOTIDE SEQUENCE [MRNA]</scope>
</reference>
<reference key="2">
    <citation type="journal article" date="2004" name="Genome Res.">
        <title>The status, quality, and expansion of the NIH full-length cDNA project: the Mammalian Gene Collection (MGC).</title>
        <authorList>
            <consortium name="The MGC Project Team"/>
        </authorList>
    </citation>
    <scope>NUCLEOTIDE SEQUENCE [LARGE SCALE MRNA]</scope>
    <source>
        <tissue>Testis</tissue>
    </source>
</reference>
<reference key="3">
    <citation type="submission" date="2006-11" db="UniProtKB">
        <authorList>
            <person name="Lubec G."/>
            <person name="Afjehi-Sadat L."/>
        </authorList>
    </citation>
    <scope>PROTEIN SEQUENCE OF 42-59; 183-195 AND 231-240</scope>
    <scope>IDENTIFICATION BY MASS SPECTROMETRY</scope>
    <source>
        <strain>Sprague-Dawley</strain>
        <tissue>Spinal cord</tissue>
    </source>
</reference>
<reference key="4">
    <citation type="journal article" date="2009" name="Reproduction">
        <title>Identification of novel immunodominant epididymal sperm proteins using combinatorial approach.</title>
        <authorList>
            <person name="Khan S.A."/>
            <person name="Suryawanshi A.R."/>
            <person name="Ranpura S.A."/>
            <person name="Jadhav S.V."/>
            <person name="Khole V.V."/>
        </authorList>
    </citation>
    <scope>IDENTIFICATION BY MASS SPECTROMETRY</scope>
    <scope>TISSUE SPECIFICITY</scope>
</reference>
<reference key="5">
    <citation type="journal article" date="2012" name="Nat. Commun.">
        <title>Quantitative maps of protein phosphorylation sites across 14 different rat organs and tissues.</title>
        <authorList>
            <person name="Lundby A."/>
            <person name="Secher A."/>
            <person name="Lage K."/>
            <person name="Nordsborg N.B."/>
            <person name="Dmytriyev A."/>
            <person name="Lundby C."/>
            <person name="Olsen J.V."/>
        </authorList>
    </citation>
    <scope>PHOSPHORYLATION [LARGE SCALE ANALYSIS] AT SER-367</scope>
    <scope>IDENTIFICATION BY MASS SPECTROMETRY [LARGE SCALE ANALYSIS]</scope>
</reference>
<gene>
    <name type="primary">Uqcrc2</name>
</gene>
<organism>
    <name type="scientific">Rattus norvegicus</name>
    <name type="common">Rat</name>
    <dbReference type="NCBI Taxonomy" id="10116"/>
    <lineage>
        <taxon>Eukaryota</taxon>
        <taxon>Metazoa</taxon>
        <taxon>Chordata</taxon>
        <taxon>Craniata</taxon>
        <taxon>Vertebrata</taxon>
        <taxon>Euteleostomi</taxon>
        <taxon>Mammalia</taxon>
        <taxon>Eutheria</taxon>
        <taxon>Euarchontoglires</taxon>
        <taxon>Glires</taxon>
        <taxon>Rodentia</taxon>
        <taxon>Myomorpha</taxon>
        <taxon>Muroidea</taxon>
        <taxon>Muridae</taxon>
        <taxon>Murinae</taxon>
        <taxon>Rattus</taxon>
    </lineage>
</organism>
<dbReference type="EMBL" id="BC083610">
    <property type="protein sequence ID" value="AAH83610.1"/>
    <property type="molecule type" value="mRNA"/>
</dbReference>
<dbReference type="PIR" id="S29510">
    <property type="entry name" value="S29510"/>
</dbReference>
<dbReference type="RefSeq" id="NP_001006971.1">
    <property type="nucleotide sequence ID" value="NM_001006970.1"/>
</dbReference>
<dbReference type="SMR" id="P32551"/>
<dbReference type="BioGRID" id="254272">
    <property type="interactions" value="6"/>
</dbReference>
<dbReference type="CORUM" id="P32551"/>
<dbReference type="FunCoup" id="P32551">
    <property type="interactions" value="2028"/>
</dbReference>
<dbReference type="IntAct" id="P32551">
    <property type="interactions" value="8"/>
</dbReference>
<dbReference type="MINT" id="P32551"/>
<dbReference type="STRING" id="10116.ENSRNOP00000021514"/>
<dbReference type="MEROPS" id="M16.974"/>
<dbReference type="CarbonylDB" id="P32551"/>
<dbReference type="GlyGen" id="P32551">
    <property type="glycosylation" value="3 sites, 1 O-linked glycan (3 sites)"/>
</dbReference>
<dbReference type="iPTMnet" id="P32551"/>
<dbReference type="PhosphoSitePlus" id="P32551"/>
<dbReference type="SwissPalm" id="P32551"/>
<dbReference type="jPOST" id="P32551"/>
<dbReference type="PaxDb" id="10116-ENSRNOP00000021514"/>
<dbReference type="Ensembl" id="ENSRNOT00000021514.6">
    <property type="protein sequence ID" value="ENSRNOP00000021514.4"/>
    <property type="gene ID" value="ENSRNOG00000036742.4"/>
</dbReference>
<dbReference type="GeneID" id="293448"/>
<dbReference type="KEGG" id="rno:293448"/>
<dbReference type="UCSC" id="RGD:1359150">
    <property type="organism name" value="rat"/>
</dbReference>
<dbReference type="AGR" id="RGD:1359150"/>
<dbReference type="CTD" id="7385"/>
<dbReference type="RGD" id="1359150">
    <property type="gene designation" value="Uqcrc2"/>
</dbReference>
<dbReference type="eggNOG" id="KOG2583">
    <property type="taxonomic scope" value="Eukaryota"/>
</dbReference>
<dbReference type="GeneTree" id="ENSGT00940000154915"/>
<dbReference type="HOGENOM" id="CLU_009902_0_0_1"/>
<dbReference type="InParanoid" id="P32551"/>
<dbReference type="OrthoDB" id="6369905at2759"/>
<dbReference type="PhylomeDB" id="P32551"/>
<dbReference type="TreeFam" id="TF105033"/>
<dbReference type="Reactome" id="R-RNO-611105">
    <property type="pathway name" value="Respiratory electron transport"/>
</dbReference>
<dbReference type="Reactome" id="R-RNO-9837999">
    <property type="pathway name" value="Mitochondrial protein degradation"/>
</dbReference>
<dbReference type="Reactome" id="R-RNO-9865881">
    <property type="pathway name" value="Complex III assembly"/>
</dbReference>
<dbReference type="PRO" id="PR:P32551"/>
<dbReference type="Proteomes" id="UP000002494">
    <property type="component" value="Chromosome 1"/>
</dbReference>
<dbReference type="Bgee" id="ENSRNOG00000036742">
    <property type="expression patterns" value="Expressed in heart and 20 other cell types or tissues"/>
</dbReference>
<dbReference type="GO" id="GO:0005743">
    <property type="term" value="C:mitochondrial inner membrane"/>
    <property type="evidence" value="ECO:0000266"/>
    <property type="project" value="RGD"/>
</dbReference>
<dbReference type="GO" id="GO:0005739">
    <property type="term" value="C:mitochondrion"/>
    <property type="evidence" value="ECO:0000266"/>
    <property type="project" value="RGD"/>
</dbReference>
<dbReference type="GO" id="GO:0045275">
    <property type="term" value="C:respiratory chain complex III"/>
    <property type="evidence" value="ECO:0000314"/>
    <property type="project" value="RGD"/>
</dbReference>
<dbReference type="GO" id="GO:0046872">
    <property type="term" value="F:metal ion binding"/>
    <property type="evidence" value="ECO:0007669"/>
    <property type="project" value="InterPro"/>
</dbReference>
<dbReference type="GO" id="GO:0004222">
    <property type="term" value="F:metalloendopeptidase activity"/>
    <property type="evidence" value="ECO:0007669"/>
    <property type="project" value="InterPro"/>
</dbReference>
<dbReference type="GO" id="GO:0044877">
    <property type="term" value="F:protein-containing complex binding"/>
    <property type="evidence" value="ECO:0000314"/>
    <property type="project" value="RGD"/>
</dbReference>
<dbReference type="GO" id="GO:0006508">
    <property type="term" value="P:proteolysis"/>
    <property type="evidence" value="ECO:0007669"/>
    <property type="project" value="InterPro"/>
</dbReference>
<dbReference type="GO" id="GO:0009410">
    <property type="term" value="P:response to xenobiotic stimulus"/>
    <property type="evidence" value="ECO:0000270"/>
    <property type="project" value="RGD"/>
</dbReference>
<dbReference type="FunFam" id="3.30.830.10:FF:000018">
    <property type="entry name" value="Cytochrome b-c1 complex subunit 2, mitochondrial"/>
    <property type="match status" value="1"/>
</dbReference>
<dbReference type="FunFam" id="3.30.830.10:FF:000026">
    <property type="entry name" value="Cytochrome b-c1 complex subunit 2, mitochondrial"/>
    <property type="match status" value="1"/>
</dbReference>
<dbReference type="Gene3D" id="3.30.830.10">
    <property type="entry name" value="Metalloenzyme, LuxS/M16 peptidase-like"/>
    <property type="match status" value="2"/>
</dbReference>
<dbReference type="InterPro" id="IPR011249">
    <property type="entry name" value="Metalloenz_LuxS/M16"/>
</dbReference>
<dbReference type="InterPro" id="IPR050361">
    <property type="entry name" value="MPP/UQCRC_Complex"/>
</dbReference>
<dbReference type="InterPro" id="IPR011765">
    <property type="entry name" value="Pept_M16_N"/>
</dbReference>
<dbReference type="InterPro" id="IPR001431">
    <property type="entry name" value="Pept_M16_Zn_BS"/>
</dbReference>
<dbReference type="InterPro" id="IPR007863">
    <property type="entry name" value="Peptidase_M16_C"/>
</dbReference>
<dbReference type="PANTHER" id="PTHR11851:SF226">
    <property type="entry name" value="CYTOCHROME B-C1 COMPLEX SUBUNIT 2, MITOCHONDRIAL"/>
    <property type="match status" value="1"/>
</dbReference>
<dbReference type="PANTHER" id="PTHR11851">
    <property type="entry name" value="METALLOPROTEASE"/>
    <property type="match status" value="1"/>
</dbReference>
<dbReference type="Pfam" id="PF00675">
    <property type="entry name" value="Peptidase_M16"/>
    <property type="match status" value="1"/>
</dbReference>
<dbReference type="Pfam" id="PF05193">
    <property type="entry name" value="Peptidase_M16_C"/>
    <property type="match status" value="1"/>
</dbReference>
<dbReference type="SUPFAM" id="SSF63411">
    <property type="entry name" value="LuxS/MPP-like metallohydrolase"/>
    <property type="match status" value="2"/>
</dbReference>
<dbReference type="PROSITE" id="PS00143">
    <property type="entry name" value="INSULINASE"/>
    <property type="match status" value="1"/>
</dbReference>
<feature type="transit peptide" description="Mitochondrion" evidence="1">
    <location>
        <begin position="1"/>
        <end position="14"/>
    </location>
</feature>
<feature type="chain" id="PRO_0000026793" description="Cytochrome b-c1 complex subunit 2, mitochondrial">
    <location>
        <begin position="15"/>
        <end position="452"/>
    </location>
</feature>
<feature type="modified residue" description="N6-acetyllysine" evidence="5">
    <location>
        <position position="65"/>
    </location>
</feature>
<feature type="modified residue" description="N6-acetyllysine" evidence="5">
    <location>
        <position position="198"/>
    </location>
</feature>
<feature type="modified residue" description="N6-acetyllysine" evidence="5">
    <location>
        <position position="249"/>
    </location>
</feature>
<feature type="modified residue" description="Phosphoserine" evidence="8">
    <location>
        <position position="367"/>
    </location>
</feature>
<feature type="sequence conflict" description="In Ref. 1." evidence="7" ref="1">
    <original>H</original>
    <variation>N</variation>
    <location>
        <position position="445"/>
    </location>
</feature>
<sequence length="452" mass="48396">MKLLSRAGSFSRFYSLKVAPKLKTSAPGGVPLQPQELEFTKLPNGLVIASLENYAPLSRIGLFIKAGSRYENYNYLGTSHLLRLASTLTTKGASSFKITRGIEAVGGKLSVTATRENMAYTVEGIRDDIEILMEFLLNVTTAPEFRRWEVAALRSQLKIDKAVAFQNPQTRIIENLHDVAYKNALANPLYCPDYRMGKITSEELHYFVQNHFTSARMALVGLGVSHSILKEVAEQFLNIRGGLGLAGAKAKYRGGEIREQNGDNLVHAAIVAESAAIGNAEANAFSVLQHLLGAGPHIKRGNNTTSLLSQSVAKGSQQPFDVSAFNASYSDSGLFGIYTVSQAAAAGDVINAAYNQVKAVAQGNLSSADVQAAKNKLKAGYLMSVETSEGFLSEIGSQALATGSYMPPPTVLQQIDAVADADVVKAAKKFVSGKKSMTASGNLGHTPFLDEL</sequence>
<name>QCR2_RAT</name>
<accession>P32551</accession>
<accession>Q5XIR3</accession>
<protein>
    <recommendedName>
        <fullName>Cytochrome b-c1 complex subunit 2, mitochondrial</fullName>
    </recommendedName>
    <alternativeName>
        <fullName>Complex III subunit 2</fullName>
    </alternativeName>
    <alternativeName>
        <fullName>Core protein II</fullName>
    </alternativeName>
    <alternativeName>
        <fullName>Ubiquinol-cytochrome-c reductase complex core protein 2</fullName>
    </alternativeName>
</protein>
<evidence type="ECO:0000250" key="1"/>
<evidence type="ECO:0000250" key="2">
    <source>
        <dbReference type="UniProtKB" id="P07257"/>
    </source>
</evidence>
<evidence type="ECO:0000250" key="3">
    <source>
        <dbReference type="UniProtKB" id="P22695"/>
    </source>
</evidence>
<evidence type="ECO:0000250" key="4">
    <source>
        <dbReference type="UniProtKB" id="P23004"/>
    </source>
</evidence>
<evidence type="ECO:0000250" key="5">
    <source>
        <dbReference type="UniProtKB" id="Q9DB77"/>
    </source>
</evidence>
<evidence type="ECO:0000269" key="6">
    <source>
    </source>
</evidence>
<evidence type="ECO:0000305" key="7"/>
<evidence type="ECO:0007744" key="8">
    <source>
    </source>
</evidence>
<comment type="function">
    <text evidence="2 4">Component of the ubiquinol-cytochrome c oxidoreductase, a multisubunit transmembrane complex that is part of the mitochondrial electron transport chain which drives oxidative phosphorylation. The respiratory chain contains 3 multisubunit complexes succinate dehydrogenase (complex II, CII), ubiquinol-cytochrome c oxidoreductase (cytochrome b-c1 complex, complex III, CIII) and cytochrome c oxidase (complex IV, CIV), that cooperate to transfer electrons derived from NADH and succinate to molecular oxygen, creating an electrochemical gradient over the inner membrane that drives transmembrane transport and the ATP synthase. The cytochrome b-c1 complex catalyzes electron transfer from ubiquinol to cytochrome c, linking this redox reaction to translocation of protons across the mitochondrial inner membrane, with protons being carried across the membrane as hydrogens on the quinol. In the process called Q cycle, 2 protons are consumed from the matrix, 4 protons are released into the intermembrane space and 2 electrons are passed to cytochrome c (By similarity). The 2 core subunits UQCRC1/QCR1 and UQCRC2/QCR2 are homologous to the 2 mitochondrial-processing peptidase (MPP) subunits beta-MPP and alpha-MPP respectively, and they seem to have preserved their MPP processing properties. May be involved in the in situ processing of UQCRFS1 into the mature Rieske protein and its mitochondrial targeting sequence (MTS)/subunit 9 when incorporated into complex III (By similarity).</text>
</comment>
<comment type="subunit">
    <text evidence="3 4 5">Component of the ubiquinol-cytochrome c oxidoreductase (cytochrome b-c1 complex, complex III, CIII), a multisubunit enzyme composed of 11 subunits. The complex is composed of 3 respiratory subunits cytochrome b, cytochrome c1 and Rieske protein UQCRFS1, 2 core protein subunits UQCRC1/QCR1 and UQCRC2/QCR2, and 6 low-molecular weight protein subunits UQCRH/QCR6, UQCRB/QCR7, UQCRQ/QCR8, UQCR10/QCR9, UQCR11/QCR10 and subunit 9, the cleavage product of Rieske protein UQCRFS1 (By similarity). The complex exists as an obligatory dimer and forms supercomplexes (SCs) in the inner mitochondrial membrane with NADH-ubiquinone oxidoreductase (complex I, CI) and cytochrome c oxidase (complex IV, CIV), resulting in different assemblies (supercomplex SCI(1)III(2)IV(1) and megacomplex MCI(2)III(2)IV(2)) (By similarity). Interacts with RAB5IF (By similarity). Interacts with STMP1 (By similarity).</text>
</comment>
<comment type="subcellular location">
    <subcellularLocation>
        <location evidence="2">Mitochondrion inner membrane</location>
        <topology evidence="2">Peripheral membrane protein</topology>
        <orientation evidence="2">Matrix side</orientation>
    </subcellularLocation>
</comment>
<comment type="tissue specificity">
    <text evidence="6">Expressed in the head region and flagellum of epididymal sperm.</text>
</comment>
<comment type="similarity">
    <text evidence="7">Belongs to the peptidase M16 family. UQCRC2/QCR2 subfamily.</text>
</comment>
<keyword id="KW-0007">Acetylation</keyword>
<keyword id="KW-0903">Direct protein sequencing</keyword>
<keyword id="KW-0249">Electron transport</keyword>
<keyword id="KW-0472">Membrane</keyword>
<keyword id="KW-0496">Mitochondrion</keyword>
<keyword id="KW-0999">Mitochondrion inner membrane</keyword>
<keyword id="KW-0597">Phosphoprotein</keyword>
<keyword id="KW-1185">Reference proteome</keyword>
<keyword id="KW-0679">Respiratory chain</keyword>
<keyword id="KW-0809">Transit peptide</keyword>
<keyword id="KW-0813">Transport</keyword>
<proteinExistence type="evidence at protein level"/>